<comment type="catalytic activity">
    <reaction>
        <text>D-mannitol 1-phosphate + NAD(+) = beta-D-fructose 6-phosphate + NADH + H(+)</text>
        <dbReference type="Rhea" id="RHEA:19661"/>
        <dbReference type="ChEBI" id="CHEBI:15378"/>
        <dbReference type="ChEBI" id="CHEBI:57540"/>
        <dbReference type="ChEBI" id="CHEBI:57634"/>
        <dbReference type="ChEBI" id="CHEBI:57945"/>
        <dbReference type="ChEBI" id="CHEBI:61381"/>
        <dbReference type="EC" id="1.1.1.17"/>
    </reaction>
</comment>
<comment type="similarity">
    <text evidence="2">Belongs to the mannitol dehydrogenase family.</text>
</comment>
<sequence length="328" mass="38565">MNLIHFGAGNIGCGFIAPILSSIVDHIYFVDNNIDIVNKINTQKLIKIHTSDSKKISITNISAWLLTDFINYKKTWNEVSLLTISIGIKNLKHIIYYVNQLIDYKIKNNQKLIIMCCENGIRVSSLFKSYFSNLNNNIYFVDVLVDRIVSNKNILNDYLECEDYYLWIVDKTQLPSDFKQVPNLTYTTSFDIQITKKIYMLNALHCSLAWFVFKNFSFNKYLYVYQALKNDKVVEFVNNYLNEVILVLNHKYNINLDELNNYKNQIIKRLNSNFIKDDLKRLARNTELKLSKNERILTILDYAKDNNLKHDILLLSYQNGLEYLKNNK</sequence>
<organism>
    <name type="scientific">Mycoplasma mycoides subsp. mycoides SC (strain CCUG 32753 / NCTC 10114 / PG1)</name>
    <dbReference type="NCBI Taxonomy" id="272632"/>
    <lineage>
        <taxon>Bacteria</taxon>
        <taxon>Bacillati</taxon>
        <taxon>Mycoplasmatota</taxon>
        <taxon>Mollicutes</taxon>
        <taxon>Mycoplasmataceae</taxon>
        <taxon>Mycoplasma</taxon>
    </lineage>
</organism>
<protein>
    <recommendedName>
        <fullName>Mannitol-1-phosphate 5-dehydrogenase</fullName>
        <ecNumber>1.1.1.17</ecNumber>
    </recommendedName>
</protein>
<proteinExistence type="inferred from homology"/>
<gene>
    <name type="primary">mtlD</name>
    <name type="ordered locus">MSC_0017</name>
</gene>
<dbReference type="EC" id="1.1.1.17"/>
<dbReference type="EMBL" id="BX293980">
    <property type="protein sequence ID" value="CAE76670.1"/>
    <property type="molecule type" value="Genomic_DNA"/>
</dbReference>
<dbReference type="EMBL" id="U61140">
    <property type="protein sequence ID" value="AAC44573.1"/>
    <property type="molecule type" value="Genomic_DNA"/>
</dbReference>
<dbReference type="RefSeq" id="NP_975028.1">
    <property type="nucleotide sequence ID" value="NC_005364.2"/>
</dbReference>
<dbReference type="RefSeq" id="WP_011166228.1">
    <property type="nucleotide sequence ID" value="NC_005364.2"/>
</dbReference>
<dbReference type="SMR" id="P55800"/>
<dbReference type="STRING" id="272632.MSC_0017"/>
<dbReference type="KEGG" id="mmy:MSC_0017"/>
<dbReference type="PATRIC" id="fig|272632.4.peg.17"/>
<dbReference type="eggNOG" id="COG0246">
    <property type="taxonomic scope" value="Bacteria"/>
</dbReference>
<dbReference type="HOGENOM" id="CLU_036089_2_0_14"/>
<dbReference type="Proteomes" id="UP000001016">
    <property type="component" value="Chromosome"/>
</dbReference>
<dbReference type="GO" id="GO:0005829">
    <property type="term" value="C:cytosol"/>
    <property type="evidence" value="ECO:0007669"/>
    <property type="project" value="TreeGrafter"/>
</dbReference>
<dbReference type="GO" id="GO:0008926">
    <property type="term" value="F:mannitol-1-phosphate 5-dehydrogenase activity"/>
    <property type="evidence" value="ECO:0007669"/>
    <property type="project" value="UniProtKB-EC"/>
</dbReference>
<dbReference type="GO" id="GO:0019592">
    <property type="term" value="P:mannitol catabolic process"/>
    <property type="evidence" value="ECO:0007669"/>
    <property type="project" value="TreeGrafter"/>
</dbReference>
<dbReference type="Gene3D" id="1.10.1040.10">
    <property type="entry name" value="N-(1-d-carboxylethyl)-l-norvaline Dehydrogenase, domain 2"/>
    <property type="match status" value="1"/>
</dbReference>
<dbReference type="Gene3D" id="3.40.50.720">
    <property type="entry name" value="NAD(P)-binding Rossmann-like Domain"/>
    <property type="match status" value="1"/>
</dbReference>
<dbReference type="InterPro" id="IPR008927">
    <property type="entry name" value="6-PGluconate_DH-like_C_sf"/>
</dbReference>
<dbReference type="InterPro" id="IPR013328">
    <property type="entry name" value="6PGD_dom2"/>
</dbReference>
<dbReference type="InterPro" id="IPR013118">
    <property type="entry name" value="Mannitol_DH_C"/>
</dbReference>
<dbReference type="InterPro" id="IPR023027">
    <property type="entry name" value="Mannitol_DH_CS"/>
</dbReference>
<dbReference type="InterPro" id="IPR013131">
    <property type="entry name" value="Mannitol_DH_N"/>
</dbReference>
<dbReference type="InterPro" id="IPR036291">
    <property type="entry name" value="NAD(P)-bd_dom_sf"/>
</dbReference>
<dbReference type="PANTHER" id="PTHR30524:SF0">
    <property type="entry name" value="ALTRONATE OXIDOREDUCTASE-RELATED"/>
    <property type="match status" value="1"/>
</dbReference>
<dbReference type="PANTHER" id="PTHR30524">
    <property type="entry name" value="MANNITOL-1-PHOSPHATE 5-DEHYDROGENASE"/>
    <property type="match status" value="1"/>
</dbReference>
<dbReference type="Pfam" id="PF01232">
    <property type="entry name" value="Mannitol_dh"/>
    <property type="match status" value="1"/>
</dbReference>
<dbReference type="Pfam" id="PF08125">
    <property type="entry name" value="Mannitol_dh_C"/>
    <property type="match status" value="1"/>
</dbReference>
<dbReference type="SUPFAM" id="SSF48179">
    <property type="entry name" value="6-phosphogluconate dehydrogenase C-terminal domain-like"/>
    <property type="match status" value="1"/>
</dbReference>
<dbReference type="SUPFAM" id="SSF51735">
    <property type="entry name" value="NAD(P)-binding Rossmann-fold domains"/>
    <property type="match status" value="1"/>
</dbReference>
<dbReference type="PROSITE" id="PS00974">
    <property type="entry name" value="MANNITOL_DHGENASE"/>
    <property type="match status" value="1"/>
</dbReference>
<name>MTLD_MYCMS</name>
<feature type="chain" id="PRO_0000170711" description="Mannitol-1-phosphate 5-dehydrogenase">
    <location>
        <begin position="1"/>
        <end position="328"/>
    </location>
</feature>
<feature type="binding site" evidence="1">
    <location>
        <begin position="3"/>
        <end position="14"/>
    </location>
    <ligand>
        <name>NAD(+)</name>
        <dbReference type="ChEBI" id="CHEBI:57540"/>
    </ligand>
</feature>
<feature type="sequence conflict" description="In Ref. 2; AAC44573." evidence="2" ref="2">
    <original>S</original>
    <variation>R</variation>
    <location>
        <position position="176"/>
    </location>
</feature>
<feature type="sequence conflict" description="In Ref. 2; AAC44573." evidence="2" ref="2">
    <original>F</original>
    <variation>L</variation>
    <location>
        <position position="190"/>
    </location>
</feature>
<accession>P55800</accession>
<keyword id="KW-0520">NAD</keyword>
<keyword id="KW-0560">Oxidoreductase</keyword>
<keyword id="KW-1185">Reference proteome</keyword>
<reference key="1">
    <citation type="journal article" date="2004" name="Genome Res.">
        <title>The genome sequence of Mycoplasma mycoides subsp. mycoides SC type strain PG1T, the causative agent of contagious bovine pleuropneumonia (CBPP).</title>
        <authorList>
            <person name="Westberg J."/>
            <person name="Persson A."/>
            <person name="Holmberg A."/>
            <person name="Goesmann A."/>
            <person name="Lundeberg J."/>
            <person name="Johansson K.-E."/>
            <person name="Pettersson B."/>
            <person name="Uhlen M."/>
        </authorList>
    </citation>
    <scope>NUCLEOTIDE SEQUENCE [LARGE SCALE GENOMIC DNA]</scope>
    <source>
        <strain>CCUG 32753 / NCTC 10114 / PG1</strain>
    </source>
</reference>
<reference key="2">
    <citation type="journal article" date="1996" name="Microbiology">
        <title>Characterization of the gene for an immunodominant 72 kDa lipoprotein of Mycoplasma mycoides subsp. mycoides small colony type.</title>
        <authorList>
            <person name="Cheng X."/>
            <person name="Nicolet J."/>
            <person name="Miserez R."/>
            <person name="Kuhnert P."/>
            <person name="Krampe M."/>
            <person name="Pilloud T."/>
            <person name="Abdo E.-M."/>
            <person name="Griot C."/>
            <person name="Frey J."/>
        </authorList>
    </citation>
    <scope>NUCLEOTIDE SEQUENCE [GENOMIC DNA] OF 106-328</scope>
    <source>
        <strain>L2</strain>
    </source>
</reference>
<evidence type="ECO:0000250" key="1"/>
<evidence type="ECO:0000305" key="2"/>